<accession>P0A9Q9</accession>
<accession>P00353</accession>
<accession>Q2M797</accession>
<proteinExistence type="evidence at protein level"/>
<name>DHAS_ECOLI</name>
<comment type="function">
    <text evidence="3 7">Catalyzes the NADPH-dependent formation of L-aspartate-semialdehyde (L-ASA) by the reductive dephosphorylation of L-aspartyl-4-phosphate.</text>
</comment>
<comment type="catalytic activity">
    <reaction evidence="3 7">
        <text>L-aspartate 4-semialdehyde + phosphate + NADP(+) = 4-phospho-L-aspartate + NADPH + H(+)</text>
        <dbReference type="Rhea" id="RHEA:24284"/>
        <dbReference type="ChEBI" id="CHEBI:15378"/>
        <dbReference type="ChEBI" id="CHEBI:43474"/>
        <dbReference type="ChEBI" id="CHEBI:57535"/>
        <dbReference type="ChEBI" id="CHEBI:57783"/>
        <dbReference type="ChEBI" id="CHEBI:58349"/>
        <dbReference type="ChEBI" id="CHEBI:537519"/>
        <dbReference type="EC" id="1.2.1.11"/>
    </reaction>
</comment>
<comment type="activity regulation">
    <text evidence="6">Is inhibited by L- and D-cystine, and by other cystine derivatives, via the formation of a covalently bound cysteine at the active site Cys-135.</text>
</comment>
<comment type="biophysicochemical properties">
    <kinetics>
        <KM evidence="3">22 uM for L-4-aspartyl phosphate</KM>
        <KM evidence="3">29 uM for NADPH</KM>
        <KM evidence="3">110 uM for L-aspartate 4-semialdehyde</KM>
        <KM evidence="3">144 uM for NADP(+)</KM>
        <KM evidence="3">10.2 mM for phosphate</KM>
    </kinetics>
</comment>
<comment type="pathway">
    <text evidence="1">Amino-acid biosynthesis; L-lysine biosynthesis via DAP pathway; (S)-tetrahydrodipicolinate from L-aspartate: step 2/4.</text>
</comment>
<comment type="pathway">
    <text evidence="1">Amino-acid biosynthesis; L-methionine biosynthesis via de novo pathway; L-homoserine from L-aspartate: step 2/3.</text>
</comment>
<comment type="pathway">
    <text evidence="1">Amino-acid biosynthesis; L-threonine biosynthesis; L-threonine from L-aspartate: step 2/5.</text>
</comment>
<comment type="subunit">
    <text evidence="4 7">Homodimer.</text>
</comment>
<comment type="domain">
    <text evidence="2">Consists of two domains, an N-terminal nucleotide-binding domain and a C-terminal dimerization domain.</text>
</comment>
<comment type="similarity">
    <text evidence="1">Belongs to the aspartate-semialdehyde dehydrogenase family.</text>
</comment>
<feature type="chain" id="PRO_0000141369" description="Aspartate-semialdehyde dehydrogenase">
    <location>
        <begin position="1"/>
        <end position="367"/>
    </location>
</feature>
<feature type="active site" description="Acyl-thioester intermediate" evidence="4">
    <location>
        <position position="135"/>
    </location>
</feature>
<feature type="active site" description="Proton acceptor" evidence="9">
    <location>
        <position position="274"/>
    </location>
</feature>
<feature type="binding site" evidence="4">
    <location>
        <begin position="10"/>
        <end position="13"/>
    </location>
    <ligand>
        <name>NADP(+)</name>
        <dbReference type="ChEBI" id="CHEBI:58349"/>
    </ligand>
</feature>
<feature type="binding site" evidence="4">
    <location>
        <begin position="37"/>
        <end position="38"/>
    </location>
    <ligand>
        <name>NADP(+)</name>
        <dbReference type="ChEBI" id="CHEBI:58349"/>
    </ligand>
</feature>
<feature type="binding site" evidence="4">
    <location>
        <position position="73"/>
    </location>
    <ligand>
        <name>NADP(+)</name>
        <dbReference type="ChEBI" id="CHEBI:58349"/>
    </ligand>
</feature>
<feature type="binding site" evidence="1">
    <location>
        <position position="102"/>
    </location>
    <ligand>
        <name>phosphate</name>
        <dbReference type="ChEBI" id="CHEBI:43474"/>
    </ligand>
</feature>
<feature type="binding site" evidence="9">
    <location>
        <position position="162"/>
    </location>
    <ligand>
        <name>substrate</name>
    </ligand>
</feature>
<feature type="binding site" evidence="4">
    <location>
        <begin position="165"/>
        <end position="169"/>
    </location>
    <ligand>
        <name>NADP(+)</name>
        <dbReference type="ChEBI" id="CHEBI:58349"/>
    </ligand>
</feature>
<feature type="binding site" evidence="4">
    <location>
        <position position="173"/>
    </location>
    <ligand>
        <name>NADP(+)</name>
        <dbReference type="ChEBI" id="CHEBI:58349"/>
    </ligand>
</feature>
<feature type="binding site" evidence="4">
    <location>
        <position position="193"/>
    </location>
    <ligand>
        <name>NADP(+)</name>
        <dbReference type="ChEBI" id="CHEBI:58349"/>
    </ligand>
</feature>
<feature type="binding site" evidence="9">
    <location>
        <position position="241"/>
    </location>
    <ligand>
        <name>substrate</name>
    </ligand>
</feature>
<feature type="binding site" evidence="1">
    <location>
        <position position="244"/>
    </location>
    <ligand>
        <name>phosphate</name>
        <dbReference type="ChEBI" id="CHEBI:43474"/>
    </ligand>
</feature>
<feature type="binding site" evidence="9">
    <location>
        <position position="267"/>
    </location>
    <ligand>
        <name>substrate</name>
    </ligand>
</feature>
<feature type="binding site" evidence="4">
    <location>
        <position position="350"/>
    </location>
    <ligand>
        <name>NADP(+)</name>
        <dbReference type="ChEBI" id="CHEBI:58349"/>
    </ligand>
</feature>
<feature type="modified residue" description="S-cysteinyl cysteine; in inhibited form">
    <location>
        <position position="135"/>
    </location>
</feature>
<feature type="mutagenesis site" description="Complete loss of activity." evidence="5">
    <original>C</original>
    <variation>A</variation>
    <location>
        <position position="135"/>
    </location>
</feature>
<feature type="mutagenesis site" description="99.7% loss of activity." evidence="5">
    <original>C</original>
    <variation>S</variation>
    <location>
        <position position="135"/>
    </location>
</feature>
<feature type="sequence conflict" description="In Ref. 5; AA sequence." evidence="8" ref="5">
    <original>W</original>
    <variation>G</variation>
    <location>
        <position position="9"/>
    </location>
</feature>
<feature type="strand" evidence="11">
    <location>
        <begin position="3"/>
        <end position="8"/>
    </location>
</feature>
<feature type="helix" evidence="11">
    <location>
        <begin position="12"/>
        <end position="23"/>
    </location>
</feature>
<feature type="helix" evidence="11">
    <location>
        <begin position="26"/>
        <end position="29"/>
    </location>
</feature>
<feature type="strand" evidence="11">
    <location>
        <begin position="30"/>
        <end position="39"/>
    </location>
</feature>
<feature type="strand" evidence="12">
    <location>
        <begin position="41"/>
        <end position="43"/>
    </location>
</feature>
<feature type="helix" evidence="11">
    <location>
        <begin position="46"/>
        <end position="48"/>
    </location>
</feature>
<feature type="helix" evidence="11">
    <location>
        <begin position="60"/>
        <end position="64"/>
    </location>
</feature>
<feature type="strand" evidence="11">
    <location>
        <begin position="67"/>
        <end position="71"/>
    </location>
</feature>
<feature type="helix" evidence="11">
    <location>
        <begin position="75"/>
        <end position="87"/>
    </location>
</feature>
<feature type="strand" evidence="11">
    <location>
        <begin position="93"/>
        <end position="96"/>
    </location>
</feature>
<feature type="turn" evidence="11">
    <location>
        <begin position="100"/>
        <end position="103"/>
    </location>
</feature>
<feature type="strand" evidence="11">
    <location>
        <begin position="107"/>
        <end position="110"/>
    </location>
</feature>
<feature type="helix" evidence="11">
    <location>
        <begin position="112"/>
        <end position="124"/>
    </location>
</feature>
<feature type="strand" evidence="11">
    <location>
        <begin position="129"/>
        <end position="132"/>
    </location>
</feature>
<feature type="helix" evidence="11">
    <location>
        <begin position="135"/>
        <end position="149"/>
    </location>
</feature>
<feature type="strand" evidence="11">
    <location>
        <begin position="153"/>
        <end position="162"/>
    </location>
</feature>
<feature type="helix" evidence="11">
    <location>
        <begin position="164"/>
        <end position="166"/>
    </location>
</feature>
<feature type="helix" evidence="11">
    <location>
        <begin position="169"/>
        <end position="185"/>
    </location>
</feature>
<feature type="helix" evidence="11">
    <location>
        <begin position="187"/>
        <end position="190"/>
    </location>
</feature>
<feature type="helix" evidence="11">
    <location>
        <begin position="197"/>
        <end position="210"/>
    </location>
</feature>
<feature type="turn" evidence="11">
    <location>
        <begin position="216"/>
        <end position="218"/>
    </location>
</feature>
<feature type="strand" evidence="11">
    <location>
        <begin position="226"/>
        <end position="228"/>
    </location>
</feature>
<feature type="strand" evidence="10">
    <location>
        <begin position="235"/>
        <end position="239"/>
    </location>
</feature>
<feature type="helix" evidence="11">
    <location>
        <begin position="240"/>
        <end position="253"/>
    </location>
</feature>
<feature type="strand" evidence="11">
    <location>
        <begin position="261"/>
        <end position="264"/>
    </location>
</feature>
<feature type="strand" evidence="11">
    <location>
        <begin position="267"/>
        <end position="269"/>
    </location>
</feature>
<feature type="strand" evidence="11">
    <location>
        <begin position="271"/>
        <end position="284"/>
    </location>
</feature>
<feature type="helix" evidence="11">
    <location>
        <begin position="288"/>
        <end position="298"/>
    </location>
</feature>
<feature type="strand" evidence="10">
    <location>
        <begin position="302"/>
        <end position="304"/>
    </location>
</feature>
<feature type="helix" evidence="11">
    <location>
        <begin position="309"/>
        <end position="315"/>
    </location>
</feature>
<feature type="helix" evidence="11">
    <location>
        <begin position="318"/>
        <end position="321"/>
    </location>
</feature>
<feature type="strand" evidence="11">
    <location>
        <begin position="329"/>
        <end position="334"/>
    </location>
</feature>
<feature type="strand" evidence="11">
    <location>
        <begin position="341"/>
        <end position="349"/>
    </location>
</feature>
<feature type="helix" evidence="11">
    <location>
        <begin position="352"/>
        <end position="356"/>
    </location>
</feature>
<feature type="helix" evidence="11">
    <location>
        <begin position="357"/>
        <end position="366"/>
    </location>
</feature>
<dbReference type="EC" id="1.2.1.11" evidence="3 7"/>
<dbReference type="EMBL" id="V00262">
    <property type="protein sequence ID" value="CAA23511.1"/>
    <property type="molecule type" value="Genomic_DNA"/>
</dbReference>
<dbReference type="EMBL" id="U18997">
    <property type="protein sequence ID" value="AAA58231.1"/>
    <property type="molecule type" value="Genomic_DNA"/>
</dbReference>
<dbReference type="EMBL" id="U00096">
    <property type="protein sequence ID" value="AAC76458.1"/>
    <property type="molecule type" value="Genomic_DNA"/>
</dbReference>
<dbReference type="EMBL" id="AP009048">
    <property type="protein sequence ID" value="BAE77859.1"/>
    <property type="molecule type" value="Genomic_DNA"/>
</dbReference>
<dbReference type="PIR" id="A00364">
    <property type="entry name" value="DEECDA"/>
</dbReference>
<dbReference type="RefSeq" id="NP_417891.1">
    <property type="nucleotide sequence ID" value="NC_000913.3"/>
</dbReference>
<dbReference type="RefSeq" id="WP_000799956.1">
    <property type="nucleotide sequence ID" value="NZ_STEB01000004.1"/>
</dbReference>
<dbReference type="PDB" id="1BRM">
    <property type="method" value="X-ray"/>
    <property type="resolution" value="2.50 A"/>
    <property type="chains" value="A/B/C=1-367"/>
</dbReference>
<dbReference type="PDB" id="1GL3">
    <property type="method" value="X-ray"/>
    <property type="resolution" value="2.60 A"/>
    <property type="chains" value="A/B=1-367"/>
</dbReference>
<dbReference type="PDB" id="1T4B">
    <property type="method" value="X-ray"/>
    <property type="resolution" value="1.60 A"/>
    <property type="chains" value="A/B=1-367"/>
</dbReference>
<dbReference type="PDB" id="1T4D">
    <property type="method" value="X-ray"/>
    <property type="resolution" value="1.95 A"/>
    <property type="chains" value="A/B/C=1-367"/>
</dbReference>
<dbReference type="PDBsum" id="1BRM"/>
<dbReference type="PDBsum" id="1GL3"/>
<dbReference type="PDBsum" id="1T4B"/>
<dbReference type="PDBsum" id="1T4D"/>
<dbReference type="PCDDB" id="P0A9Q9"/>
<dbReference type="SMR" id="P0A9Q9"/>
<dbReference type="BioGRID" id="4262504">
    <property type="interactions" value="8"/>
</dbReference>
<dbReference type="FunCoup" id="P0A9Q9">
    <property type="interactions" value="212"/>
</dbReference>
<dbReference type="IntAct" id="P0A9Q9">
    <property type="interactions" value="1"/>
</dbReference>
<dbReference type="STRING" id="511145.b3433"/>
<dbReference type="jPOST" id="P0A9Q9"/>
<dbReference type="PaxDb" id="511145-b3433"/>
<dbReference type="EnsemblBacteria" id="AAC76458">
    <property type="protein sequence ID" value="AAC76458"/>
    <property type="gene ID" value="b3433"/>
</dbReference>
<dbReference type="GeneID" id="75202278"/>
<dbReference type="GeneID" id="947939"/>
<dbReference type="KEGG" id="ecj:JW3396"/>
<dbReference type="KEGG" id="eco:b3433"/>
<dbReference type="KEGG" id="ecoc:C3026_18610"/>
<dbReference type="PATRIC" id="fig|511145.12.peg.3530"/>
<dbReference type="EchoBASE" id="EB0086"/>
<dbReference type="eggNOG" id="COG0136">
    <property type="taxonomic scope" value="Bacteria"/>
</dbReference>
<dbReference type="HOGENOM" id="CLU_066397_0_0_6"/>
<dbReference type="InParanoid" id="P0A9Q9"/>
<dbReference type="OMA" id="FVCGDNL"/>
<dbReference type="OrthoDB" id="9022717at2"/>
<dbReference type="PhylomeDB" id="P0A9Q9"/>
<dbReference type="BioCyc" id="EcoCyc:ASP-SEMIALDEHYDE-DEHYDROGENASE-MONOMER"/>
<dbReference type="BioCyc" id="MetaCyc:ASP-SEMIALDEHYDE-DEHYDROGENASE-MONOMER"/>
<dbReference type="BRENDA" id="1.2.1.11">
    <property type="organism ID" value="2026"/>
</dbReference>
<dbReference type="SABIO-RK" id="P0A9Q9"/>
<dbReference type="UniPathway" id="UPA00034">
    <property type="reaction ID" value="UER00016"/>
</dbReference>
<dbReference type="UniPathway" id="UPA00050">
    <property type="reaction ID" value="UER00463"/>
</dbReference>
<dbReference type="UniPathway" id="UPA00051">
    <property type="reaction ID" value="UER00464"/>
</dbReference>
<dbReference type="EvolutionaryTrace" id="P0A9Q9"/>
<dbReference type="PRO" id="PR:P0A9Q9"/>
<dbReference type="Proteomes" id="UP000000625">
    <property type="component" value="Chromosome"/>
</dbReference>
<dbReference type="GO" id="GO:0005829">
    <property type="term" value="C:cytosol"/>
    <property type="evidence" value="ECO:0000314"/>
    <property type="project" value="EcoCyc"/>
</dbReference>
<dbReference type="GO" id="GO:0004073">
    <property type="term" value="F:aspartate-semialdehyde dehydrogenase activity"/>
    <property type="evidence" value="ECO:0000314"/>
    <property type="project" value="EcoCyc"/>
</dbReference>
<dbReference type="GO" id="GO:0051287">
    <property type="term" value="F:NAD binding"/>
    <property type="evidence" value="ECO:0007669"/>
    <property type="project" value="InterPro"/>
</dbReference>
<dbReference type="GO" id="GO:0050661">
    <property type="term" value="F:NADP binding"/>
    <property type="evidence" value="ECO:0007669"/>
    <property type="project" value="UniProtKB-UniRule"/>
</dbReference>
<dbReference type="GO" id="GO:0046983">
    <property type="term" value="F:protein dimerization activity"/>
    <property type="evidence" value="ECO:0007669"/>
    <property type="project" value="InterPro"/>
</dbReference>
<dbReference type="GO" id="GO:0071266">
    <property type="term" value="P:'de novo' L-methionine biosynthetic process"/>
    <property type="evidence" value="ECO:0007669"/>
    <property type="project" value="UniProtKB-UniRule"/>
</dbReference>
<dbReference type="GO" id="GO:0019877">
    <property type="term" value="P:diaminopimelate biosynthetic process"/>
    <property type="evidence" value="ECO:0007669"/>
    <property type="project" value="UniProtKB-UniRule"/>
</dbReference>
<dbReference type="GO" id="GO:0006974">
    <property type="term" value="P:DNA damage response"/>
    <property type="evidence" value="ECO:0000270"/>
    <property type="project" value="EcoliWiki"/>
</dbReference>
<dbReference type="GO" id="GO:0009090">
    <property type="term" value="P:homoserine biosynthetic process"/>
    <property type="evidence" value="ECO:0000314"/>
    <property type="project" value="EcoCyc"/>
</dbReference>
<dbReference type="GO" id="GO:0009097">
    <property type="term" value="P:isoleucine biosynthetic process"/>
    <property type="evidence" value="ECO:0007669"/>
    <property type="project" value="InterPro"/>
</dbReference>
<dbReference type="GO" id="GO:0009089">
    <property type="term" value="P:lysine biosynthetic process via diaminopimelate"/>
    <property type="evidence" value="ECO:0000314"/>
    <property type="project" value="EcoCyc"/>
</dbReference>
<dbReference type="GO" id="GO:0009088">
    <property type="term" value="P:threonine biosynthetic process"/>
    <property type="evidence" value="ECO:0007669"/>
    <property type="project" value="UniProtKB-UniRule"/>
</dbReference>
<dbReference type="CDD" id="cd23938">
    <property type="entry name" value="ASADH_C_bac_like"/>
    <property type="match status" value="1"/>
</dbReference>
<dbReference type="CDD" id="cd02314">
    <property type="entry name" value="VcASADH1_like_N"/>
    <property type="match status" value="1"/>
</dbReference>
<dbReference type="DisProt" id="DP02663"/>
<dbReference type="FunFam" id="3.30.360.10:FF:000012">
    <property type="entry name" value="Aspartate-semialdehyde dehydrogenase"/>
    <property type="match status" value="1"/>
</dbReference>
<dbReference type="FunFam" id="3.40.50.720:FF:000152">
    <property type="entry name" value="Aspartate-semialdehyde dehydrogenase"/>
    <property type="match status" value="1"/>
</dbReference>
<dbReference type="Gene3D" id="3.30.360.10">
    <property type="entry name" value="Dihydrodipicolinate Reductase, domain 2"/>
    <property type="match status" value="1"/>
</dbReference>
<dbReference type="Gene3D" id="3.40.50.720">
    <property type="entry name" value="NAD(P)-binding Rossmann-like Domain"/>
    <property type="match status" value="1"/>
</dbReference>
<dbReference type="HAMAP" id="MF_02121">
    <property type="entry name" value="ASADH"/>
    <property type="match status" value="1"/>
</dbReference>
<dbReference type="InterPro" id="IPR000319">
    <property type="entry name" value="Asp-semialdehyde_DH_CS"/>
</dbReference>
<dbReference type="InterPro" id="IPR011534">
    <property type="entry name" value="Asp_ADH_gamma-type"/>
</dbReference>
<dbReference type="InterPro" id="IPR012080">
    <property type="entry name" value="Asp_semialdehyde_DH"/>
</dbReference>
<dbReference type="InterPro" id="IPR036291">
    <property type="entry name" value="NAD(P)-bd_dom_sf"/>
</dbReference>
<dbReference type="InterPro" id="IPR000534">
    <property type="entry name" value="Semialdehyde_DH_NAD-bd"/>
</dbReference>
<dbReference type="InterPro" id="IPR012280">
    <property type="entry name" value="Semialdhyde_DH_dimer_dom"/>
</dbReference>
<dbReference type="NCBIfam" id="TIGR01745">
    <property type="entry name" value="asd_gamma"/>
    <property type="match status" value="1"/>
</dbReference>
<dbReference type="NCBIfam" id="NF005144">
    <property type="entry name" value="PRK06598.1"/>
    <property type="match status" value="1"/>
</dbReference>
<dbReference type="PANTHER" id="PTHR46278:SF4">
    <property type="entry name" value="ASPARTATE-SEMIALDEHYDE DEHYDROGENASE"/>
    <property type="match status" value="1"/>
</dbReference>
<dbReference type="PANTHER" id="PTHR46278">
    <property type="entry name" value="DEHYDROGENASE, PUTATIVE-RELATED"/>
    <property type="match status" value="1"/>
</dbReference>
<dbReference type="Pfam" id="PF01118">
    <property type="entry name" value="Semialdhyde_dh"/>
    <property type="match status" value="1"/>
</dbReference>
<dbReference type="Pfam" id="PF02774">
    <property type="entry name" value="Semialdhyde_dhC"/>
    <property type="match status" value="1"/>
</dbReference>
<dbReference type="PIRSF" id="PIRSF000148">
    <property type="entry name" value="ASA_dh"/>
    <property type="match status" value="1"/>
</dbReference>
<dbReference type="SMART" id="SM00859">
    <property type="entry name" value="Semialdhyde_dh"/>
    <property type="match status" value="1"/>
</dbReference>
<dbReference type="SUPFAM" id="SSF55347">
    <property type="entry name" value="Glyceraldehyde-3-phosphate dehydrogenase-like, C-terminal domain"/>
    <property type="match status" value="1"/>
</dbReference>
<dbReference type="SUPFAM" id="SSF51735">
    <property type="entry name" value="NAD(P)-binding Rossmann-fold domains"/>
    <property type="match status" value="1"/>
</dbReference>
<dbReference type="PROSITE" id="PS01103">
    <property type="entry name" value="ASD"/>
    <property type="match status" value="1"/>
</dbReference>
<protein>
    <recommendedName>
        <fullName evidence="1">Aspartate-semialdehyde dehydrogenase</fullName>
        <shortName evidence="1">ASA dehydrogenase</shortName>
        <shortName evidence="1">ASADH</shortName>
        <ecNumber evidence="3 7">1.2.1.11</ecNumber>
    </recommendedName>
    <alternativeName>
        <fullName evidence="1">Aspartate-beta-semialdehyde dehydrogenase</fullName>
    </alternativeName>
</protein>
<keyword id="KW-0002">3D-structure</keyword>
<keyword id="KW-0028">Amino-acid biosynthesis</keyword>
<keyword id="KW-0220">Diaminopimelate biosynthesis</keyword>
<keyword id="KW-0903">Direct protein sequencing</keyword>
<keyword id="KW-0457">Lysine biosynthesis</keyword>
<keyword id="KW-0486">Methionine biosynthesis</keyword>
<keyword id="KW-0521">NADP</keyword>
<keyword id="KW-0560">Oxidoreductase</keyword>
<keyword id="KW-1185">Reference proteome</keyword>
<keyword id="KW-0791">Threonine biosynthesis</keyword>
<organism>
    <name type="scientific">Escherichia coli (strain K12)</name>
    <dbReference type="NCBI Taxonomy" id="83333"/>
    <lineage>
        <taxon>Bacteria</taxon>
        <taxon>Pseudomonadati</taxon>
        <taxon>Pseudomonadota</taxon>
        <taxon>Gammaproteobacteria</taxon>
        <taxon>Enterobacterales</taxon>
        <taxon>Enterobacteriaceae</taxon>
        <taxon>Escherichia</taxon>
    </lineage>
</organism>
<evidence type="ECO:0000255" key="1">
    <source>
        <dbReference type="HAMAP-Rule" id="MF_02121"/>
    </source>
</evidence>
<evidence type="ECO:0000269" key="2">
    <source>
    </source>
</evidence>
<evidence type="ECO:0000269" key="3">
    <source>
    </source>
</evidence>
<evidence type="ECO:0000269" key="4">
    <source>
    </source>
</evidence>
<evidence type="ECO:0000269" key="5">
    <source>
    </source>
</evidence>
<evidence type="ECO:0000269" key="6">
    <source>
    </source>
</evidence>
<evidence type="ECO:0000269" key="7">
    <source>
    </source>
</evidence>
<evidence type="ECO:0000305" key="8"/>
<evidence type="ECO:0000305" key="9">
    <source>
    </source>
</evidence>
<evidence type="ECO:0007829" key="10">
    <source>
        <dbReference type="PDB" id="1GL3"/>
    </source>
</evidence>
<evidence type="ECO:0007829" key="11">
    <source>
        <dbReference type="PDB" id="1T4B"/>
    </source>
</evidence>
<evidence type="ECO:0007829" key="12">
    <source>
        <dbReference type="PDB" id="1T4D"/>
    </source>
</evidence>
<reference key="1">
    <citation type="journal article" date="1982" name="EMBO J.">
        <title>Nucleotide sequence of the asd gene of Escherichia coli: absence of a typical attenuation signal.</title>
        <authorList>
            <person name="Haziza C."/>
            <person name="Stragier P."/>
            <person name="Patte J.-C."/>
        </authorList>
    </citation>
    <scope>NUCLEOTIDE SEQUENCE [GENOMIC DNA]</scope>
</reference>
<reference key="2">
    <citation type="journal article" date="1997" name="Science">
        <title>The complete genome sequence of Escherichia coli K-12.</title>
        <authorList>
            <person name="Blattner F.R."/>
            <person name="Plunkett G. III"/>
            <person name="Bloch C.A."/>
            <person name="Perna N.T."/>
            <person name="Burland V."/>
            <person name="Riley M."/>
            <person name="Collado-Vides J."/>
            <person name="Glasner J.D."/>
            <person name="Rode C.K."/>
            <person name="Mayhew G.F."/>
            <person name="Gregor J."/>
            <person name="Davis N.W."/>
            <person name="Kirkpatrick H.A."/>
            <person name="Goeden M.A."/>
            <person name="Rose D.J."/>
            <person name="Mau B."/>
            <person name="Shao Y."/>
        </authorList>
    </citation>
    <scope>NUCLEOTIDE SEQUENCE [LARGE SCALE GENOMIC DNA]</scope>
    <source>
        <strain>K12 / MG1655 / ATCC 47076</strain>
    </source>
</reference>
<reference key="3">
    <citation type="journal article" date="2006" name="Mol. Syst. Biol.">
        <title>Highly accurate genome sequences of Escherichia coli K-12 strains MG1655 and W3110.</title>
        <authorList>
            <person name="Hayashi K."/>
            <person name="Morooka N."/>
            <person name="Yamamoto Y."/>
            <person name="Fujita K."/>
            <person name="Isono K."/>
            <person name="Choi S."/>
            <person name="Ohtsubo E."/>
            <person name="Baba T."/>
            <person name="Wanner B.L."/>
            <person name="Mori H."/>
            <person name="Horiuchi T."/>
        </authorList>
    </citation>
    <scope>NUCLEOTIDE SEQUENCE [LARGE SCALE GENOMIC DNA]</scope>
    <source>
        <strain>K12 / W3110 / ATCC 27325 / DSM 5911</strain>
    </source>
</reference>
<reference key="4">
    <citation type="journal article" date="1980" name="Eur. J. Biochem.">
        <title>Aspartate-beta-semialdehyde dehydrogenase from Escherichia coli. Purification and general properties.</title>
        <authorList>
            <person name="Biellmann J.F."/>
            <person name="Eid P."/>
            <person name="Hirth C."/>
            <person name="Jornvall H."/>
        </authorList>
    </citation>
    <scope>PROTEIN SEQUENCE OF 1-5</scope>
    <scope>FUNCTION</scope>
    <scope>CATALYTIC ACTIVITY</scope>
    <scope>SUBUNIT</scope>
    <source>
        <strain>K12</strain>
    </source>
</reference>
<reference key="5">
    <citation type="journal article" date="1997" name="Electrophoresis">
        <title>Comparing the predicted and observed properties of proteins encoded in the genome of Escherichia coli K-12.</title>
        <authorList>
            <person name="Link A.J."/>
            <person name="Robison K."/>
            <person name="Church G.M."/>
        </authorList>
    </citation>
    <scope>PROTEIN SEQUENCE OF 1-12</scope>
    <source>
        <strain>K12 / EMG2</strain>
    </source>
</reference>
<reference key="6">
    <citation type="journal article" date="1992" name="Biochim. Biophys. Acta">
        <title>Identification of an essential cysteine in the reaction catalyzed by aspartate-beta-semialdehyde dehydrogenase from Escherichia coli.</title>
        <authorList>
            <person name="Karsten W.E."/>
            <person name="Viola R.E."/>
        </authorList>
    </citation>
    <scope>ACTIVE SITE</scope>
    <scope>MUTAGENESIS OF CYS-135</scope>
</reference>
<reference key="7">
    <citation type="journal article" date="2001" name="Biochem. J.">
        <title>An integrated study of threonine-pathway enzyme kinetics in Escherichia coli.</title>
        <authorList>
            <person name="Chassagnole C."/>
            <person name="Rais B."/>
            <person name="Quentin E."/>
            <person name="Fell D.A."/>
            <person name="Mazat J.P."/>
        </authorList>
    </citation>
    <scope>FUNCTION</scope>
    <scope>CATALYTIC ACTIVITY</scope>
    <scope>KINETIC PARAMETERS</scope>
</reference>
<reference key="8">
    <citation type="journal article" date="2004" name="Biochim. Biophys. Acta">
        <title>L-cystine inhibits aspartate-beta-semialdehyde dehydrogenase by covalently binding to the essential 135Cys of the enzyme.</title>
        <authorList>
            <person name="Alvarez E."/>
            <person name="Ramon F."/>
            <person name="Magan C."/>
            <person name="Diez E."/>
        </authorList>
    </citation>
    <scope>ACTIVITY REGULATION</scope>
    <scope>INHIBITION BY CYSTEINE BINDING AT CYS-135</scope>
</reference>
<reference key="9">
    <citation type="journal article" date="1999" name="J. Mol. Biol.">
        <title>Structure of aspartate-beta-semialdehyde dehydrogenase from Escherichia coli, a key enzyme in the aspartate family of amino acid biosynthesis.</title>
        <authorList>
            <person name="Hadfield A."/>
            <person name="Kryger G."/>
            <person name="Ouyang J."/>
            <person name="Petsko G.A."/>
            <person name="Ringe D."/>
            <person name="Viola R."/>
        </authorList>
    </citation>
    <scope>X-RAY CRYSTALLOGRAPHY (2.5 ANGSTROMS)</scope>
    <scope>DOMAIN</scope>
</reference>
<reference key="10">
    <citation type="journal article" date="2001" name="Biochemistry">
        <title>Active site analysis of the potential antimicrobial target aspartate semialdehyde dehydrogenase.</title>
        <authorList>
            <person name="Hadfield A."/>
            <person name="Shammas C."/>
            <person name="Kryger G."/>
            <person name="Ringe D."/>
            <person name="Petsko G.A."/>
            <person name="Ouyang J."/>
            <person name="Viola R.E."/>
        </authorList>
    </citation>
    <scope>X-RAY CRYSTALLOGRAPHY (2.60 ANGSTROMS) IN COMPLEX WITH CYSTEINE AND NADP</scope>
    <scope>ACTIVE SITE</scope>
    <scope>CATALYTIC MECHANISM</scope>
</reference>
<reference key="11">
    <citation type="journal article" date="2004" name="J. Mol. Biol.">
        <title>High-resolution structures reveal details of domain closure and 'half-of-sites-reactivity' in Escherichia coli aspartate beta-semialdehyde dehydrogenase.</title>
        <authorList>
            <person name="Nichols C.E."/>
            <person name="Dhaliwal B."/>
            <person name="Lockyer M."/>
            <person name="Hawkins A.R."/>
            <person name="Stammers D.K."/>
        </authorList>
    </citation>
    <scope>X-RAY CRYSTALLOGRAPHY (1.6 ANGSTROMS) OF MUTANT GLN-2</scope>
</reference>
<gene>
    <name evidence="1" type="primary">asd</name>
    <name type="synonym">hom</name>
    <name type="ordered locus">b3433</name>
    <name type="ordered locus">JW3396</name>
</gene>
<sequence>MKNVGFIGWRGMVGSVLMQRMVEERDFDAIRPVFFSTSQLGQAAPSFGGTTGTLQDAFDLEALKALDIIVTCQGGDYTNEIYPKLRESGWQGYWIDAASSLRMKDDAIIILDPVNQDVITDGLNNGIRTFVGGNCTVSLMLMSLGGLFANDLVDWVSVATYQAASGGGARHMRELLTQMGHLYGHVADELATPSSAILDIERKVTTLTRSGELPVDNFGVPLAGSLIPWIDKQLDNGQSREEWKGQAETNKILNTSSVIPVDGLCVRVGALRCHSQAFTIKLKKDVSIPTVEELLAAHNPWAKVVPNDREITMRELTPAAVTGTLTTPVGRLRKLNMGPEFLSAFTVGDQLLWGAAEPLRRMLRQLA</sequence>